<feature type="chain" id="PRO_0000225946" description="Chaperone protein DnaK">
    <location>
        <begin position="1"/>
        <end position="650"/>
    </location>
</feature>
<feature type="region of interest" description="Disordered" evidence="2">
    <location>
        <begin position="614"/>
        <end position="635"/>
    </location>
</feature>
<feature type="modified residue" description="Phosphothreonine; by autocatalysis" evidence="1">
    <location>
        <position position="200"/>
    </location>
</feature>
<comment type="function">
    <text evidence="1">Acts as a chaperone.</text>
</comment>
<comment type="induction">
    <text evidence="1">By stress conditions e.g. heat shock.</text>
</comment>
<comment type="similarity">
    <text evidence="1">Belongs to the heat shock protein 70 family.</text>
</comment>
<reference key="1">
    <citation type="submission" date="2005-10" db="EMBL/GenBank/DDBJ databases">
        <title>Complete sequence of chromosome 1 of Burkholderia sp. 383.</title>
        <authorList>
            <consortium name="US DOE Joint Genome Institute"/>
            <person name="Copeland A."/>
            <person name="Lucas S."/>
            <person name="Lapidus A."/>
            <person name="Barry K."/>
            <person name="Detter J.C."/>
            <person name="Glavina T."/>
            <person name="Hammon N."/>
            <person name="Israni S."/>
            <person name="Pitluck S."/>
            <person name="Chain P."/>
            <person name="Malfatti S."/>
            <person name="Shin M."/>
            <person name="Vergez L."/>
            <person name="Schmutz J."/>
            <person name="Larimer F."/>
            <person name="Land M."/>
            <person name="Kyrpides N."/>
            <person name="Lykidis A."/>
            <person name="Richardson P."/>
        </authorList>
    </citation>
    <scope>NUCLEOTIDE SEQUENCE [LARGE SCALE GENOMIC DNA]</scope>
    <source>
        <strain>ATCC 17760 / DSM 23089 / LMG 22485 / NCIMB 9086 / R18194 / 383</strain>
    </source>
</reference>
<dbReference type="EMBL" id="CP000151">
    <property type="protein sequence ID" value="ABB07438.1"/>
    <property type="molecule type" value="Genomic_DNA"/>
</dbReference>
<dbReference type="RefSeq" id="WP_011351024.1">
    <property type="nucleotide sequence ID" value="NZ_CADFCT010000005.1"/>
</dbReference>
<dbReference type="SMR" id="Q39JC8"/>
<dbReference type="GeneID" id="45093750"/>
<dbReference type="KEGG" id="bur:Bcep18194_A3839"/>
<dbReference type="PATRIC" id="fig|482957.22.peg.706"/>
<dbReference type="HOGENOM" id="CLU_005965_2_1_4"/>
<dbReference type="Proteomes" id="UP000002705">
    <property type="component" value="Chromosome 1"/>
</dbReference>
<dbReference type="GO" id="GO:0005524">
    <property type="term" value="F:ATP binding"/>
    <property type="evidence" value="ECO:0007669"/>
    <property type="project" value="UniProtKB-UniRule"/>
</dbReference>
<dbReference type="GO" id="GO:0140662">
    <property type="term" value="F:ATP-dependent protein folding chaperone"/>
    <property type="evidence" value="ECO:0007669"/>
    <property type="project" value="InterPro"/>
</dbReference>
<dbReference type="GO" id="GO:0051082">
    <property type="term" value="F:unfolded protein binding"/>
    <property type="evidence" value="ECO:0007669"/>
    <property type="project" value="InterPro"/>
</dbReference>
<dbReference type="CDD" id="cd10234">
    <property type="entry name" value="ASKHA_NBD_HSP70_DnaK-like"/>
    <property type="match status" value="1"/>
</dbReference>
<dbReference type="FunFam" id="2.60.34.10:FF:000014">
    <property type="entry name" value="Chaperone protein DnaK HSP70"/>
    <property type="match status" value="1"/>
</dbReference>
<dbReference type="FunFam" id="3.30.30.30:FF:000003">
    <property type="entry name" value="Heat shock protein 9"/>
    <property type="match status" value="1"/>
</dbReference>
<dbReference type="FunFam" id="1.20.1270.10:FF:000001">
    <property type="entry name" value="Molecular chaperone DnaK"/>
    <property type="match status" value="1"/>
</dbReference>
<dbReference type="FunFam" id="3.30.420.40:FF:000004">
    <property type="entry name" value="Molecular chaperone DnaK"/>
    <property type="match status" value="1"/>
</dbReference>
<dbReference type="FunFam" id="3.90.640.10:FF:000003">
    <property type="entry name" value="Molecular chaperone DnaK"/>
    <property type="match status" value="1"/>
</dbReference>
<dbReference type="Gene3D" id="1.20.1270.10">
    <property type="match status" value="1"/>
</dbReference>
<dbReference type="Gene3D" id="3.30.420.40">
    <property type="match status" value="2"/>
</dbReference>
<dbReference type="Gene3D" id="3.90.640.10">
    <property type="entry name" value="Actin, Chain A, domain 4"/>
    <property type="match status" value="1"/>
</dbReference>
<dbReference type="Gene3D" id="2.60.34.10">
    <property type="entry name" value="Substrate Binding Domain Of DNAk, Chain A, domain 1"/>
    <property type="match status" value="1"/>
</dbReference>
<dbReference type="HAMAP" id="MF_00332">
    <property type="entry name" value="DnaK"/>
    <property type="match status" value="1"/>
</dbReference>
<dbReference type="InterPro" id="IPR043129">
    <property type="entry name" value="ATPase_NBD"/>
</dbReference>
<dbReference type="InterPro" id="IPR012725">
    <property type="entry name" value="Chaperone_DnaK"/>
</dbReference>
<dbReference type="InterPro" id="IPR018181">
    <property type="entry name" value="Heat_shock_70_CS"/>
</dbReference>
<dbReference type="InterPro" id="IPR029048">
    <property type="entry name" value="HSP70_C_sf"/>
</dbReference>
<dbReference type="InterPro" id="IPR029047">
    <property type="entry name" value="HSP70_peptide-bd_sf"/>
</dbReference>
<dbReference type="InterPro" id="IPR013126">
    <property type="entry name" value="Hsp_70_fam"/>
</dbReference>
<dbReference type="NCBIfam" id="NF001413">
    <property type="entry name" value="PRK00290.1"/>
    <property type="match status" value="1"/>
</dbReference>
<dbReference type="NCBIfam" id="NF003520">
    <property type="entry name" value="PRK05183.1"/>
    <property type="match status" value="1"/>
</dbReference>
<dbReference type="NCBIfam" id="TIGR02350">
    <property type="entry name" value="prok_dnaK"/>
    <property type="match status" value="1"/>
</dbReference>
<dbReference type="PANTHER" id="PTHR19375">
    <property type="entry name" value="HEAT SHOCK PROTEIN 70KDA"/>
    <property type="match status" value="1"/>
</dbReference>
<dbReference type="Pfam" id="PF00012">
    <property type="entry name" value="HSP70"/>
    <property type="match status" value="1"/>
</dbReference>
<dbReference type="PRINTS" id="PR00301">
    <property type="entry name" value="HEATSHOCK70"/>
</dbReference>
<dbReference type="SUPFAM" id="SSF53067">
    <property type="entry name" value="Actin-like ATPase domain"/>
    <property type="match status" value="2"/>
</dbReference>
<dbReference type="SUPFAM" id="SSF100934">
    <property type="entry name" value="Heat shock protein 70kD (HSP70), C-terminal subdomain"/>
    <property type="match status" value="1"/>
</dbReference>
<dbReference type="SUPFAM" id="SSF100920">
    <property type="entry name" value="Heat shock protein 70kD (HSP70), peptide-binding domain"/>
    <property type="match status" value="1"/>
</dbReference>
<dbReference type="PROSITE" id="PS00297">
    <property type="entry name" value="HSP70_1"/>
    <property type="match status" value="1"/>
</dbReference>
<dbReference type="PROSITE" id="PS00329">
    <property type="entry name" value="HSP70_2"/>
    <property type="match status" value="1"/>
</dbReference>
<dbReference type="PROSITE" id="PS01036">
    <property type="entry name" value="HSP70_3"/>
    <property type="match status" value="1"/>
</dbReference>
<sequence>MGKIIGIDLGTTNSCVAIMEGNQVKVIENSEGTRTTPSIIAYMDDNEVLVGAPAKRQSVTNPKNTLFAVKRLIGRRFEEKEVQKDIGLMPYTIVKADNGDAWVEAHGEKLAPPQVSAEVLRKMKKTAEDYLGEPVTEAVITVPAYFNDSQRQATKDAGRIAGLEVKRIINEPTAAALAFGLDKVEKGDRKIAVYDLGGGTFDVSIIEIADVDGEMQFEVLSTNGDTFLGGEDFDQRIIDYIIGEFKKEQGVDLSKDVLALQRLKEAAEKAKIELSSSQQTEINLPYITADASGPKHLNLKITRAKLEALVEDLVERTIEPCRIAIKDAGVKVSDIDDVILVGGQTRMPKVLEKVKEFFGKDPRRDVNPDEAVAVGAAIQGQVLSGDRKDVLLLDVTPLSLGIETLGGVMTKMISKNTTIPTKHAQVYSTADDNQGAVTIKVFQGEREMAAGNKLLGEFNLEGIPPAPRGVPQIEVTFDIDANGILHVGAKDKATGKENKITIKANSGLSEAEIDQMIKDAEANAAEDHKLRELADSRNQGDALVHSTKKALTEYGDKLDAGEKEAIEASLKSLEELLKDSSADKAAIDAKVEELGKVSQKLGEKMYADMQAQQAGAAGAAGAAEGAAHAGGAQQAADDVVDAEFKEVKKD</sequence>
<evidence type="ECO:0000255" key="1">
    <source>
        <dbReference type="HAMAP-Rule" id="MF_00332"/>
    </source>
</evidence>
<evidence type="ECO:0000256" key="2">
    <source>
        <dbReference type="SAM" id="MobiDB-lite"/>
    </source>
</evidence>
<organism>
    <name type="scientific">Burkholderia lata (strain ATCC 17760 / DSM 23089 / LMG 22485 / NCIMB 9086 / R18194 / 383)</name>
    <dbReference type="NCBI Taxonomy" id="482957"/>
    <lineage>
        <taxon>Bacteria</taxon>
        <taxon>Pseudomonadati</taxon>
        <taxon>Pseudomonadota</taxon>
        <taxon>Betaproteobacteria</taxon>
        <taxon>Burkholderiales</taxon>
        <taxon>Burkholderiaceae</taxon>
        <taxon>Burkholderia</taxon>
        <taxon>Burkholderia cepacia complex</taxon>
    </lineage>
</organism>
<proteinExistence type="inferred from homology"/>
<keyword id="KW-0067">ATP-binding</keyword>
<keyword id="KW-0143">Chaperone</keyword>
<keyword id="KW-0547">Nucleotide-binding</keyword>
<keyword id="KW-0597">Phosphoprotein</keyword>
<keyword id="KW-0346">Stress response</keyword>
<name>DNAK_BURL3</name>
<gene>
    <name evidence="1" type="primary">dnaK</name>
    <name type="ordered locus">Bcep18194_A3839</name>
</gene>
<protein>
    <recommendedName>
        <fullName evidence="1">Chaperone protein DnaK</fullName>
    </recommendedName>
    <alternativeName>
        <fullName evidence="1">HSP70</fullName>
    </alternativeName>
    <alternativeName>
        <fullName evidence="1">Heat shock 70 kDa protein</fullName>
    </alternativeName>
    <alternativeName>
        <fullName evidence="1">Heat shock protein 70</fullName>
    </alternativeName>
</protein>
<accession>Q39JC8</accession>